<comment type="function">
    <text evidence="1">Binds 16S rRNA, required for the assembly of 30S particles and may also be responsible for determining the conformation of the 16S rRNA at the A site.</text>
</comment>
<comment type="subunit">
    <text evidence="1">Part of the 30S ribosomal subunit. Contacts proteins S3 and S10.</text>
</comment>
<comment type="similarity">
    <text evidence="1">Belongs to the universal ribosomal protein uS14 family.</text>
</comment>
<name>RS14_PARP8</name>
<gene>
    <name evidence="1" type="primary">rpsN</name>
    <name type="ordered locus">Bphy_2826</name>
</gene>
<accession>B2JI52</accession>
<protein>
    <recommendedName>
        <fullName evidence="1">Small ribosomal subunit protein uS14</fullName>
    </recommendedName>
    <alternativeName>
        <fullName evidence="2">30S ribosomal protein S14</fullName>
    </alternativeName>
</protein>
<dbReference type="EMBL" id="CP001043">
    <property type="protein sequence ID" value="ACC71998.1"/>
    <property type="molecule type" value="Genomic_DNA"/>
</dbReference>
<dbReference type="RefSeq" id="WP_012402186.1">
    <property type="nucleotide sequence ID" value="NZ_CADFGH010000028.1"/>
</dbReference>
<dbReference type="SMR" id="B2JI52"/>
<dbReference type="STRING" id="391038.Bphy_2826"/>
<dbReference type="KEGG" id="bph:Bphy_2826"/>
<dbReference type="eggNOG" id="COG0199">
    <property type="taxonomic scope" value="Bacteria"/>
</dbReference>
<dbReference type="HOGENOM" id="CLU_139869_0_1_4"/>
<dbReference type="OrthoDB" id="9810484at2"/>
<dbReference type="Proteomes" id="UP000001192">
    <property type="component" value="Chromosome 1"/>
</dbReference>
<dbReference type="GO" id="GO:0005737">
    <property type="term" value="C:cytoplasm"/>
    <property type="evidence" value="ECO:0007669"/>
    <property type="project" value="UniProtKB-ARBA"/>
</dbReference>
<dbReference type="GO" id="GO:0015935">
    <property type="term" value="C:small ribosomal subunit"/>
    <property type="evidence" value="ECO:0007669"/>
    <property type="project" value="TreeGrafter"/>
</dbReference>
<dbReference type="GO" id="GO:0019843">
    <property type="term" value="F:rRNA binding"/>
    <property type="evidence" value="ECO:0007669"/>
    <property type="project" value="UniProtKB-UniRule"/>
</dbReference>
<dbReference type="GO" id="GO:0003735">
    <property type="term" value="F:structural constituent of ribosome"/>
    <property type="evidence" value="ECO:0007669"/>
    <property type="project" value="InterPro"/>
</dbReference>
<dbReference type="GO" id="GO:0006412">
    <property type="term" value="P:translation"/>
    <property type="evidence" value="ECO:0007669"/>
    <property type="project" value="UniProtKB-UniRule"/>
</dbReference>
<dbReference type="FunFam" id="1.10.287.1480:FF:000001">
    <property type="entry name" value="30S ribosomal protein S14"/>
    <property type="match status" value="1"/>
</dbReference>
<dbReference type="Gene3D" id="1.10.287.1480">
    <property type="match status" value="1"/>
</dbReference>
<dbReference type="HAMAP" id="MF_00537">
    <property type="entry name" value="Ribosomal_uS14_1"/>
    <property type="match status" value="1"/>
</dbReference>
<dbReference type="InterPro" id="IPR001209">
    <property type="entry name" value="Ribosomal_uS14"/>
</dbReference>
<dbReference type="InterPro" id="IPR023036">
    <property type="entry name" value="Ribosomal_uS14_bac/plastid"/>
</dbReference>
<dbReference type="NCBIfam" id="NF006477">
    <property type="entry name" value="PRK08881.1"/>
    <property type="match status" value="1"/>
</dbReference>
<dbReference type="PANTHER" id="PTHR19836">
    <property type="entry name" value="30S RIBOSOMAL PROTEIN S14"/>
    <property type="match status" value="1"/>
</dbReference>
<dbReference type="PANTHER" id="PTHR19836:SF19">
    <property type="entry name" value="SMALL RIBOSOMAL SUBUNIT PROTEIN US14M"/>
    <property type="match status" value="1"/>
</dbReference>
<dbReference type="Pfam" id="PF00253">
    <property type="entry name" value="Ribosomal_S14"/>
    <property type="match status" value="1"/>
</dbReference>
<dbReference type="SUPFAM" id="SSF57716">
    <property type="entry name" value="Glucocorticoid receptor-like (DNA-binding domain)"/>
    <property type="match status" value="1"/>
</dbReference>
<feature type="chain" id="PRO_1000128340" description="Small ribosomal subunit protein uS14">
    <location>
        <begin position="1"/>
        <end position="101"/>
    </location>
</feature>
<keyword id="KW-1185">Reference proteome</keyword>
<keyword id="KW-0687">Ribonucleoprotein</keyword>
<keyword id="KW-0689">Ribosomal protein</keyword>
<keyword id="KW-0694">RNA-binding</keyword>
<keyword id="KW-0699">rRNA-binding</keyword>
<evidence type="ECO:0000255" key="1">
    <source>
        <dbReference type="HAMAP-Rule" id="MF_00537"/>
    </source>
</evidence>
<evidence type="ECO:0000305" key="2"/>
<sequence>MAKLALIEREKKRARLAAKFAPKRAELKAIIDDQSKSEEERYSARLELQQLPRNSNPTRKRNRCAITGRPRGTFRKFGLARNKIREIAFRGEIPGLTKASW</sequence>
<organism>
    <name type="scientific">Paraburkholderia phymatum (strain DSM 17167 / CIP 108236 / LMG 21445 / STM815)</name>
    <name type="common">Burkholderia phymatum</name>
    <dbReference type="NCBI Taxonomy" id="391038"/>
    <lineage>
        <taxon>Bacteria</taxon>
        <taxon>Pseudomonadati</taxon>
        <taxon>Pseudomonadota</taxon>
        <taxon>Betaproteobacteria</taxon>
        <taxon>Burkholderiales</taxon>
        <taxon>Burkholderiaceae</taxon>
        <taxon>Paraburkholderia</taxon>
    </lineage>
</organism>
<proteinExistence type="inferred from homology"/>
<reference key="1">
    <citation type="journal article" date="2014" name="Stand. Genomic Sci.">
        <title>Complete genome sequence of Burkholderia phymatum STM815(T), a broad host range and efficient nitrogen-fixing symbiont of Mimosa species.</title>
        <authorList>
            <person name="Moulin L."/>
            <person name="Klonowska A."/>
            <person name="Caroline B."/>
            <person name="Booth K."/>
            <person name="Vriezen J.A."/>
            <person name="Melkonian R."/>
            <person name="James E.K."/>
            <person name="Young J.P."/>
            <person name="Bena G."/>
            <person name="Hauser L."/>
            <person name="Land M."/>
            <person name="Kyrpides N."/>
            <person name="Bruce D."/>
            <person name="Chain P."/>
            <person name="Copeland A."/>
            <person name="Pitluck S."/>
            <person name="Woyke T."/>
            <person name="Lizotte-Waniewski M."/>
            <person name="Bristow J."/>
            <person name="Riley M."/>
        </authorList>
    </citation>
    <scope>NUCLEOTIDE SEQUENCE [LARGE SCALE GENOMIC DNA]</scope>
    <source>
        <strain>DSM 17167 / CIP 108236 / LMG 21445 / STM815</strain>
    </source>
</reference>